<organism>
    <name type="scientific">Homo sapiens</name>
    <name type="common">Human</name>
    <dbReference type="NCBI Taxonomy" id="9606"/>
    <lineage>
        <taxon>Eukaryota</taxon>
        <taxon>Metazoa</taxon>
        <taxon>Chordata</taxon>
        <taxon>Craniata</taxon>
        <taxon>Vertebrata</taxon>
        <taxon>Euteleostomi</taxon>
        <taxon>Mammalia</taxon>
        <taxon>Eutheria</taxon>
        <taxon>Euarchontoglires</taxon>
        <taxon>Primates</taxon>
        <taxon>Haplorrhini</taxon>
        <taxon>Catarrhini</taxon>
        <taxon>Hominidae</taxon>
        <taxon>Homo</taxon>
    </lineage>
</organism>
<proteinExistence type="evidence at transcript level"/>
<dbReference type="EMBL" id="AB065759">
    <property type="protein sequence ID" value="BAC05979.1"/>
    <property type="molecule type" value="Genomic_DNA"/>
</dbReference>
<dbReference type="EMBL" id="CH471065">
    <property type="protein sequence ID" value="EAW67562.1"/>
    <property type="molecule type" value="Genomic_DNA"/>
</dbReference>
<dbReference type="EMBL" id="BC136906">
    <property type="protein sequence ID" value="AAI36907.1"/>
    <property type="molecule type" value="mRNA"/>
</dbReference>
<dbReference type="EMBL" id="BK004315">
    <property type="protein sequence ID" value="DAA04713.1"/>
    <property type="molecule type" value="Genomic_DNA"/>
</dbReference>
<dbReference type="CCDS" id="CCDS31700.1"/>
<dbReference type="RefSeq" id="NP_001005187.1">
    <property type="nucleotide sequence ID" value="NM_001005187.1"/>
</dbReference>
<dbReference type="SMR" id="Q8NGN1"/>
<dbReference type="BioGRID" id="128590">
    <property type="interactions" value="40"/>
</dbReference>
<dbReference type="FunCoup" id="Q8NGN1">
    <property type="interactions" value="418"/>
</dbReference>
<dbReference type="IntAct" id="Q8NGN1">
    <property type="interactions" value="38"/>
</dbReference>
<dbReference type="STRING" id="9606.ENSP00000325203"/>
<dbReference type="GlyCosmos" id="Q8NGN1">
    <property type="glycosylation" value="1 site, No reported glycans"/>
</dbReference>
<dbReference type="GlyGen" id="Q8NGN1">
    <property type="glycosylation" value="3 sites, 1 O-linked glycan (2 sites)"/>
</dbReference>
<dbReference type="iPTMnet" id="Q8NGN1"/>
<dbReference type="PhosphoSitePlus" id="Q8NGN1"/>
<dbReference type="BioMuta" id="OR6T1"/>
<dbReference type="DMDM" id="38372731"/>
<dbReference type="MassIVE" id="Q8NGN1"/>
<dbReference type="PaxDb" id="9606-ENSP00000325203"/>
<dbReference type="ProteomicsDB" id="73558"/>
<dbReference type="Antibodypedia" id="56776">
    <property type="antibodies" value="100 antibodies from 22 providers"/>
</dbReference>
<dbReference type="DNASU" id="219874"/>
<dbReference type="Ensembl" id="ENST00000321252.3">
    <property type="protein sequence ID" value="ENSP00000325203.2"/>
    <property type="gene ID" value="ENSG00000181499.3"/>
</dbReference>
<dbReference type="GeneID" id="219874"/>
<dbReference type="KEGG" id="hsa:219874"/>
<dbReference type="MANE-Select" id="ENST00000321252.3">
    <property type="protein sequence ID" value="ENSP00000325203.2"/>
    <property type="RefSeq nucleotide sequence ID" value="NM_001005187.1"/>
    <property type="RefSeq protein sequence ID" value="NP_001005187.1"/>
</dbReference>
<dbReference type="UCSC" id="uc010sab.3">
    <property type="organism name" value="human"/>
</dbReference>
<dbReference type="AGR" id="HGNC:14848"/>
<dbReference type="CTD" id="219874"/>
<dbReference type="GeneCards" id="OR6T1"/>
<dbReference type="HGNC" id="HGNC:14848">
    <property type="gene designation" value="OR6T1"/>
</dbReference>
<dbReference type="HPA" id="ENSG00000181499">
    <property type="expression patterns" value="Tissue enhanced (pancreas)"/>
</dbReference>
<dbReference type="neXtProt" id="NX_Q8NGN1"/>
<dbReference type="OpenTargets" id="ENSG00000181499"/>
<dbReference type="PharmGKB" id="PA32605"/>
<dbReference type="VEuPathDB" id="HostDB:ENSG00000181499"/>
<dbReference type="eggNOG" id="ENOG502SH9P">
    <property type="taxonomic scope" value="Eukaryota"/>
</dbReference>
<dbReference type="GeneTree" id="ENSGT01090000260086"/>
<dbReference type="HOGENOM" id="CLU_012526_1_1_1"/>
<dbReference type="InParanoid" id="Q8NGN1"/>
<dbReference type="OMA" id="MSPENWT"/>
<dbReference type="OrthoDB" id="9902777at2759"/>
<dbReference type="PAN-GO" id="Q8NGN1">
    <property type="GO annotations" value="6 GO annotations based on evolutionary models"/>
</dbReference>
<dbReference type="PhylomeDB" id="Q8NGN1"/>
<dbReference type="TreeFam" id="TF336833"/>
<dbReference type="PathwayCommons" id="Q8NGN1"/>
<dbReference type="Reactome" id="R-HSA-9752946">
    <property type="pathway name" value="Expression and translocation of olfactory receptors"/>
</dbReference>
<dbReference type="BioGRID-ORCS" id="219874">
    <property type="hits" value="7 hits in 746 CRISPR screens"/>
</dbReference>
<dbReference type="GeneWiki" id="OR6T1"/>
<dbReference type="GenomeRNAi" id="219874"/>
<dbReference type="Pharos" id="Q8NGN1">
    <property type="development level" value="Tdark"/>
</dbReference>
<dbReference type="PRO" id="PR:Q8NGN1"/>
<dbReference type="Proteomes" id="UP000005640">
    <property type="component" value="Chromosome 11"/>
</dbReference>
<dbReference type="RNAct" id="Q8NGN1">
    <property type="molecule type" value="protein"/>
</dbReference>
<dbReference type="Bgee" id="ENSG00000181499">
    <property type="expression patterns" value="Expressed in body of pancreas and 3 other cell types or tissues"/>
</dbReference>
<dbReference type="GO" id="GO:0005886">
    <property type="term" value="C:plasma membrane"/>
    <property type="evidence" value="ECO:0007669"/>
    <property type="project" value="UniProtKB-SubCell"/>
</dbReference>
<dbReference type="GO" id="GO:0004930">
    <property type="term" value="F:G protein-coupled receptor activity"/>
    <property type="evidence" value="ECO:0007669"/>
    <property type="project" value="UniProtKB-KW"/>
</dbReference>
<dbReference type="GO" id="GO:0004984">
    <property type="term" value="F:olfactory receptor activity"/>
    <property type="evidence" value="ECO:0000318"/>
    <property type="project" value="GO_Central"/>
</dbReference>
<dbReference type="CDD" id="cd15912">
    <property type="entry name" value="7tmA_OR6C-like"/>
    <property type="match status" value="1"/>
</dbReference>
<dbReference type="FunFam" id="1.20.1070.10:FF:000010">
    <property type="entry name" value="Olfactory receptor"/>
    <property type="match status" value="1"/>
</dbReference>
<dbReference type="Gene3D" id="1.20.1070.10">
    <property type="entry name" value="Rhodopsin 7-helix transmembrane proteins"/>
    <property type="match status" value="1"/>
</dbReference>
<dbReference type="InterPro" id="IPR000276">
    <property type="entry name" value="GPCR_Rhodpsn"/>
</dbReference>
<dbReference type="InterPro" id="IPR017452">
    <property type="entry name" value="GPCR_Rhodpsn_7TM"/>
</dbReference>
<dbReference type="InterPro" id="IPR000725">
    <property type="entry name" value="Olfact_rcpt"/>
</dbReference>
<dbReference type="InterPro" id="IPR047132">
    <property type="entry name" value="Olfact_rcpt_6C-like"/>
</dbReference>
<dbReference type="PANTHER" id="PTHR26454">
    <property type="entry name" value="OLFACTORY RECEPTOR"/>
    <property type="match status" value="1"/>
</dbReference>
<dbReference type="PANTHER" id="PTHR26454:SF165">
    <property type="entry name" value="OLFACTORY RECEPTOR 6T1"/>
    <property type="match status" value="1"/>
</dbReference>
<dbReference type="Pfam" id="PF13853">
    <property type="entry name" value="7tm_4"/>
    <property type="match status" value="1"/>
</dbReference>
<dbReference type="PRINTS" id="PR00237">
    <property type="entry name" value="GPCRRHODOPSN"/>
</dbReference>
<dbReference type="PRINTS" id="PR00245">
    <property type="entry name" value="OLFACTORYR"/>
</dbReference>
<dbReference type="SUPFAM" id="SSF81321">
    <property type="entry name" value="Family A G protein-coupled receptor-like"/>
    <property type="match status" value="1"/>
</dbReference>
<dbReference type="PROSITE" id="PS00237">
    <property type="entry name" value="G_PROTEIN_RECEP_F1_1"/>
    <property type="match status" value="1"/>
</dbReference>
<dbReference type="PROSITE" id="PS50262">
    <property type="entry name" value="G_PROTEIN_RECEP_F1_2"/>
    <property type="match status" value="1"/>
</dbReference>
<feature type="chain" id="PRO_0000150638" description="Olfactory receptor 6T1">
    <location>
        <begin position="1"/>
        <end position="323"/>
    </location>
</feature>
<feature type="topological domain" description="Extracellular" evidence="1">
    <location>
        <begin position="1"/>
        <end position="25"/>
    </location>
</feature>
<feature type="transmembrane region" description="Helical; Name=1" evidence="1">
    <location>
        <begin position="26"/>
        <end position="46"/>
    </location>
</feature>
<feature type="topological domain" description="Cytoplasmic" evidence="1">
    <location>
        <begin position="47"/>
        <end position="54"/>
    </location>
</feature>
<feature type="transmembrane region" description="Helical; Name=2" evidence="1">
    <location>
        <begin position="55"/>
        <end position="75"/>
    </location>
</feature>
<feature type="topological domain" description="Extracellular" evidence="1">
    <location>
        <begin position="76"/>
        <end position="99"/>
    </location>
</feature>
<feature type="transmembrane region" description="Helical; Name=3" evidence="1">
    <location>
        <begin position="100"/>
        <end position="120"/>
    </location>
</feature>
<feature type="topological domain" description="Cytoplasmic" evidence="1">
    <location>
        <begin position="121"/>
        <end position="139"/>
    </location>
</feature>
<feature type="transmembrane region" description="Helical; Name=4" evidence="1">
    <location>
        <begin position="140"/>
        <end position="160"/>
    </location>
</feature>
<feature type="topological domain" description="Extracellular" evidence="1">
    <location>
        <begin position="161"/>
        <end position="197"/>
    </location>
</feature>
<feature type="transmembrane region" description="Helical; Name=5" evidence="1">
    <location>
        <begin position="198"/>
        <end position="217"/>
    </location>
</feature>
<feature type="topological domain" description="Cytoplasmic" evidence="1">
    <location>
        <begin position="218"/>
        <end position="237"/>
    </location>
</feature>
<feature type="transmembrane region" description="Helical; Name=6" evidence="1">
    <location>
        <begin position="238"/>
        <end position="258"/>
    </location>
</feature>
<feature type="topological domain" description="Extracellular" evidence="1">
    <location>
        <begin position="259"/>
        <end position="271"/>
    </location>
</feature>
<feature type="transmembrane region" description="Helical; Name=7" evidence="1">
    <location>
        <begin position="272"/>
        <end position="292"/>
    </location>
</feature>
<feature type="topological domain" description="Cytoplasmic" evidence="1">
    <location>
        <begin position="293"/>
        <end position="323"/>
    </location>
</feature>
<feature type="glycosylation site" description="N-linked (GlcNAc...) asparagine" evidence="1">
    <location>
        <position position="5"/>
    </location>
</feature>
<feature type="disulfide bond" evidence="2">
    <location>
        <begin position="97"/>
        <end position="189"/>
    </location>
</feature>
<feature type="sequence variant" id="VAR_048049" description="In dbSNP:rs6590022.">
    <original>I</original>
    <variation>T</variation>
    <location>
        <position position="23"/>
    </location>
</feature>
<feature type="sequence variant" id="VAR_048050" description="In dbSNP:rs6590021.">
    <original>R</original>
    <variation>W</variation>
    <location>
        <position position="64"/>
    </location>
</feature>
<feature type="sequence variant" id="VAR_048051" description="In dbSNP:rs7937317.">
    <original>I</original>
    <variation>V</variation>
    <location>
        <position position="251"/>
    </location>
</feature>
<evidence type="ECO:0000255" key="1"/>
<evidence type="ECO:0000255" key="2">
    <source>
        <dbReference type="PROSITE-ProRule" id="PRU00521"/>
    </source>
</evidence>
<evidence type="ECO:0000305" key="3"/>
<gene>
    <name type="primary">OR6T1</name>
</gene>
<reference key="1">
    <citation type="submission" date="2001-07" db="EMBL/GenBank/DDBJ databases">
        <title>Genome-wide discovery and analysis of human seven transmembrane helix receptor genes.</title>
        <authorList>
            <person name="Suwa M."/>
            <person name="Sato T."/>
            <person name="Okouchi I."/>
            <person name="Arita M."/>
            <person name="Futami K."/>
            <person name="Matsumoto S."/>
            <person name="Tsutsumi S."/>
            <person name="Aburatani H."/>
            <person name="Asai K."/>
            <person name="Akiyama Y."/>
        </authorList>
    </citation>
    <scope>NUCLEOTIDE SEQUENCE [GENOMIC DNA]</scope>
</reference>
<reference key="2">
    <citation type="submission" date="2005-07" db="EMBL/GenBank/DDBJ databases">
        <authorList>
            <person name="Mural R.J."/>
            <person name="Istrail S."/>
            <person name="Sutton G.G."/>
            <person name="Florea L."/>
            <person name="Halpern A.L."/>
            <person name="Mobarry C.M."/>
            <person name="Lippert R."/>
            <person name="Walenz B."/>
            <person name="Shatkay H."/>
            <person name="Dew I."/>
            <person name="Miller J.R."/>
            <person name="Flanigan M.J."/>
            <person name="Edwards N.J."/>
            <person name="Bolanos R."/>
            <person name="Fasulo D."/>
            <person name="Halldorsson B.V."/>
            <person name="Hannenhalli S."/>
            <person name="Turner R."/>
            <person name="Yooseph S."/>
            <person name="Lu F."/>
            <person name="Nusskern D.R."/>
            <person name="Shue B.C."/>
            <person name="Zheng X.H."/>
            <person name="Zhong F."/>
            <person name="Delcher A.L."/>
            <person name="Huson D.H."/>
            <person name="Kravitz S.A."/>
            <person name="Mouchard L."/>
            <person name="Reinert K."/>
            <person name="Remington K.A."/>
            <person name="Clark A.G."/>
            <person name="Waterman M.S."/>
            <person name="Eichler E.E."/>
            <person name="Adams M.D."/>
            <person name="Hunkapiller M.W."/>
            <person name="Myers E.W."/>
            <person name="Venter J.C."/>
        </authorList>
    </citation>
    <scope>NUCLEOTIDE SEQUENCE [LARGE SCALE GENOMIC DNA]</scope>
</reference>
<reference key="3">
    <citation type="journal article" date="2004" name="Genome Res.">
        <title>The status, quality, and expansion of the NIH full-length cDNA project: the Mammalian Gene Collection (MGC).</title>
        <authorList>
            <consortium name="The MGC Project Team"/>
        </authorList>
    </citation>
    <scope>NUCLEOTIDE SEQUENCE [LARGE SCALE MRNA]</scope>
</reference>
<reference key="4">
    <citation type="journal article" date="2004" name="Proc. Natl. Acad. Sci. U.S.A.">
        <title>The human olfactory receptor gene family.</title>
        <authorList>
            <person name="Malnic B."/>
            <person name="Godfrey P.A."/>
            <person name="Buck L.B."/>
        </authorList>
    </citation>
    <scope>IDENTIFICATION</scope>
</reference>
<reference key="5">
    <citation type="journal article" date="2004" name="Proc. Natl. Acad. Sci. U.S.A.">
        <authorList>
            <person name="Malnic B."/>
            <person name="Godfrey P.A."/>
            <person name="Buck L.B."/>
        </authorList>
    </citation>
    <scope>ERRATUM OF PUBMED:14983052</scope>
</reference>
<sequence length="323" mass="36348">MNPENWTQVTSFVLLGFPSSHLIQFLVFLGLMVTYIVTATGKLLIIVLSWIDQRLHIQMYFFLRNFSFLELLLVTVVVPKMLVVILTGDHTISFVSCIIQSYLYFFLGTTDFFLLAVMSLDRYLAICRPLRYETLMNGHVCSQLVLASWLAGFLWVLCPTVLMASLPFCGPNGIDHFFRDSWPLLRLSCGDTHLLKLVAFMLSTLVLLGSLALTSVSYACILATVLRAPTAAERRKAFSTCASHLTVVVIIYGSSIFLYIRMSEAQSKLLNKGASVLSCIITPLLNPFIFTLRNDKVQQALREALGWPRLTAVMKLRVTSQRK</sequence>
<accession>Q8NGN1</accession>
<accession>Q6IFE7</accession>
<comment type="function">
    <text evidence="3">Odorant receptor.</text>
</comment>
<comment type="subcellular location">
    <subcellularLocation>
        <location>Cell membrane</location>
        <topology>Multi-pass membrane protein</topology>
    </subcellularLocation>
</comment>
<comment type="similarity">
    <text evidence="2">Belongs to the G-protein coupled receptor 1 family.</text>
</comment>
<comment type="online information" name="Human Olfactory Receptor Data Exploratorium (HORDE)">
    <link uri="http://genome.weizmann.ac.il/horde/card/index/symbol:OR6T1"/>
</comment>
<name>OR6T1_HUMAN</name>
<protein>
    <recommendedName>
        <fullName>Olfactory receptor 6T1</fullName>
    </recommendedName>
    <alternativeName>
        <fullName>Olfactory receptor OR11-277</fullName>
    </alternativeName>
</protein>
<keyword id="KW-1003">Cell membrane</keyword>
<keyword id="KW-1015">Disulfide bond</keyword>
<keyword id="KW-0297">G-protein coupled receptor</keyword>
<keyword id="KW-0325">Glycoprotein</keyword>
<keyword id="KW-0472">Membrane</keyword>
<keyword id="KW-0552">Olfaction</keyword>
<keyword id="KW-0675">Receptor</keyword>
<keyword id="KW-1185">Reference proteome</keyword>
<keyword id="KW-0716">Sensory transduction</keyword>
<keyword id="KW-0807">Transducer</keyword>
<keyword id="KW-0812">Transmembrane</keyword>
<keyword id="KW-1133">Transmembrane helix</keyword>